<reference key="1">
    <citation type="journal article" date="2010" name="PLoS Genet.">
        <title>Analysis of the Legionella longbeachae genome and transcriptome uncovers unique strategies to cause Legionnaires' disease.</title>
        <authorList>
            <person name="Cazalet C."/>
            <person name="Gomez-Valero L."/>
            <person name="Rusniok C."/>
            <person name="Lomma M."/>
            <person name="Dervins-Ravault D."/>
            <person name="Newton H.J."/>
            <person name="Sansom F.M."/>
            <person name="Jarraud S."/>
            <person name="Zidane N."/>
            <person name="Ma L."/>
            <person name="Bouchier C."/>
            <person name="Etienne J."/>
            <person name="Hartland E.L."/>
            <person name="Buchrieser C."/>
        </authorList>
    </citation>
    <scope>NUCLEOTIDE SEQUENCE [LARGE SCALE GENOMIC DNA]</scope>
    <source>
        <strain>NSW150</strain>
    </source>
</reference>
<reference key="2">
    <citation type="journal article" date="2015" name="Chem. Biol.">
        <title>The Tetracycline Destructases: A Novel Family of Tetracycline-Inactivating Enzymes.</title>
        <authorList>
            <person name="Forsberg K.J."/>
            <person name="Patel S."/>
            <person name="Wencewicz T.A."/>
            <person name="Dantas G."/>
        </authorList>
    </citation>
    <scope>FUNCTION IN INACTIVATING TETRACYCLINE</scope>
    <scope>ANTIBIOTIC RESISTANCE</scope>
</reference>
<reference evidence="8" key="3">
    <citation type="journal article" date="2017" name="Nat. Chem. Biol.">
        <title>Plasticity, dynamics, and inhibition of emerging tetracycline resistance enzymes.</title>
        <authorList>
            <person name="Park J."/>
            <person name="Gasparrini A.J."/>
            <person name="Reck M.R."/>
            <person name="Symister C.T."/>
            <person name="Elliott J.L."/>
            <person name="Vogel J.P."/>
            <person name="Wencewicz T.A."/>
            <person name="Dantas G."/>
            <person name="Tolia N.H."/>
        </authorList>
    </citation>
    <scope>X-RAY CRYSTALLOGRAPHY (3.30 ANGSTROMS) IN COMPLEX WITH FAD</scope>
    <scope>FUNCTION</scope>
    <scope>SUBSTRATE SPECIFICITY</scope>
    <scope>COFACTOR</scope>
    <scope>ACTIVITY REGULATION</scope>
    <scope>BIOPHYSICOCHEMICAL PROPERTIES</scope>
    <scope>DOMAIN</scope>
    <scope>DISRUPTION PHENOTYPE</scope>
    <scope>ANTIBIOTIC RESISTANCE</scope>
</reference>
<sequence>MSKNIKILVIGAGVAGPAVCYWLRRFGFSPVLIEKYASIRKGGQALDVRGIATHIAREMGIYDQICEMRTRIERGRFVDSSGKVLHEEQGEKFGFRQDDEVEILRGDLVEILMKTIADVPCYFNQSIISIEQNADNVTVIFMDGRIEQYDLVIAADGIHSAIRRMIFEKNEYQLIHLGAYLSTFTIPNYLGLSHIDLECEANNKLVSINSDNNPEIARAGFMFRSQHLLNDIRDEQEQKQFLRDTFRDFGWETQNILNRMPESNDFYFDAITQVKMNSWTKGRIALVGDAGYCPSPLSGQGNNLAFVGAYILAGELKVANGNYTRAFTRYNALLRSFVDANQKFGVWVSESFLVKDEVSKEIAEERSNKILAMIKSISNGITLPQYESS</sequence>
<feature type="chain" id="PRO_0000448493" description="Flavin-dependent monooxygenase">
    <location>
        <begin position="1"/>
        <end position="389"/>
    </location>
</feature>
<feature type="binding site" evidence="8">
    <location>
        <begin position="12"/>
        <end position="15"/>
    </location>
    <ligand>
        <name>FAD</name>
        <dbReference type="ChEBI" id="CHEBI:57692"/>
    </ligand>
</feature>
<feature type="binding site" evidence="8">
    <location>
        <begin position="34"/>
        <end position="35"/>
    </location>
    <ligand>
        <name>FAD</name>
        <dbReference type="ChEBI" id="CHEBI:57692"/>
    </ligand>
</feature>
<feature type="binding site" evidence="8">
    <location>
        <position position="44"/>
    </location>
    <ligand>
        <name>FAD</name>
        <dbReference type="ChEBI" id="CHEBI:57692"/>
    </ligand>
</feature>
<feature type="binding site" evidence="8">
    <location>
        <position position="105"/>
    </location>
    <ligand>
        <name>FAD</name>
        <dbReference type="ChEBI" id="CHEBI:57692"/>
    </ligand>
</feature>
<feature type="binding site" evidence="8">
    <location>
        <position position="267"/>
    </location>
    <ligand>
        <name>FAD</name>
        <dbReference type="ChEBI" id="CHEBI:57692"/>
    </ligand>
</feature>
<feature type="binding site" evidence="8">
    <location>
        <position position="289"/>
    </location>
    <ligand>
        <name>FAD</name>
        <dbReference type="ChEBI" id="CHEBI:57692"/>
    </ligand>
</feature>
<feature type="strand" evidence="9">
    <location>
        <begin position="7"/>
        <end position="11"/>
    </location>
</feature>
<feature type="helix" evidence="9">
    <location>
        <begin position="15"/>
        <end position="25"/>
    </location>
</feature>
<feature type="strand" evidence="9">
    <location>
        <begin position="31"/>
        <end position="33"/>
    </location>
</feature>
<feature type="strand" evidence="9">
    <location>
        <begin position="35"/>
        <end position="38"/>
    </location>
</feature>
<feature type="strand" evidence="9">
    <location>
        <begin position="45"/>
        <end position="48"/>
    </location>
</feature>
<feature type="helix" evidence="9">
    <location>
        <begin position="52"/>
        <end position="58"/>
    </location>
</feature>
<feature type="helix" evidence="9">
    <location>
        <begin position="62"/>
        <end position="68"/>
    </location>
</feature>
<feature type="strand" evidence="9">
    <location>
        <begin position="74"/>
        <end position="78"/>
    </location>
</feature>
<feature type="strand" evidence="9">
    <location>
        <begin position="84"/>
        <end position="88"/>
    </location>
</feature>
<feature type="strand" evidence="9">
    <location>
        <begin position="101"/>
        <end position="104"/>
    </location>
</feature>
<feature type="helix" evidence="9">
    <location>
        <begin position="105"/>
        <end position="115"/>
    </location>
</feature>
<feature type="strand" evidence="9">
    <location>
        <begin position="127"/>
        <end position="132"/>
    </location>
</feature>
<feature type="strand" evidence="9">
    <location>
        <begin position="137"/>
        <end position="141"/>
    </location>
</feature>
<feature type="strand" evidence="9">
    <location>
        <begin position="146"/>
        <end position="154"/>
    </location>
</feature>
<feature type="helix" evidence="9">
    <location>
        <begin position="161"/>
        <end position="166"/>
    </location>
</feature>
<feature type="turn" evidence="9">
    <location>
        <begin position="169"/>
        <end position="171"/>
    </location>
</feature>
<feature type="strand" evidence="9">
    <location>
        <begin position="172"/>
        <end position="187"/>
    </location>
</feature>
<feature type="strand" evidence="9">
    <location>
        <begin position="193"/>
        <end position="201"/>
    </location>
</feature>
<feature type="strand" evidence="9">
    <location>
        <begin position="204"/>
        <end position="210"/>
    </location>
</feature>
<feature type="strand" evidence="9">
    <location>
        <begin position="212"/>
        <end position="223"/>
    </location>
</feature>
<feature type="helix" evidence="9">
    <location>
        <begin position="235"/>
        <end position="246"/>
    </location>
</feature>
<feature type="helix" evidence="9">
    <location>
        <begin position="253"/>
        <end position="258"/>
    </location>
</feature>
<feature type="strand" evidence="9">
    <location>
        <begin position="267"/>
        <end position="277"/>
    </location>
</feature>
<feature type="strand" evidence="9">
    <location>
        <begin position="279"/>
        <end position="281"/>
    </location>
</feature>
<feature type="strand" evidence="9">
    <location>
        <begin position="284"/>
        <end position="286"/>
    </location>
</feature>
<feature type="helix" evidence="9">
    <location>
        <begin position="289"/>
        <end position="292"/>
    </location>
</feature>
<feature type="helix" evidence="9">
    <location>
        <begin position="296"/>
        <end position="298"/>
    </location>
</feature>
<feature type="helix" evidence="9">
    <location>
        <begin position="301"/>
        <end position="318"/>
    </location>
</feature>
<feature type="turn" evidence="9">
    <location>
        <begin position="319"/>
        <end position="321"/>
    </location>
</feature>
<feature type="helix" evidence="9">
    <location>
        <begin position="323"/>
        <end position="351"/>
    </location>
</feature>
<feature type="helix" evidence="9">
    <location>
        <begin position="365"/>
        <end position="368"/>
    </location>
</feature>
<feature type="helix" evidence="9">
    <location>
        <begin position="369"/>
        <end position="378"/>
    </location>
</feature>
<organism>
    <name type="scientific">Legionella longbeachae serogroup 1 (strain NSW150)</name>
    <dbReference type="NCBI Taxonomy" id="661367"/>
    <lineage>
        <taxon>Bacteria</taxon>
        <taxon>Pseudomonadati</taxon>
        <taxon>Pseudomonadota</taxon>
        <taxon>Gammaproteobacteria</taxon>
        <taxon>Legionellales</taxon>
        <taxon>Legionellaceae</taxon>
        <taxon>Legionella</taxon>
    </lineage>
</organism>
<protein>
    <recommendedName>
        <fullName evidence="5">Flavin-dependent monooxygenase</fullName>
    </recommendedName>
    <alternativeName>
        <fullName evidence="4">Tetracycline destructase Tet(56)</fullName>
        <shortName>Tet(56)</shortName>
        <ecNumber evidence="6">1.14.13.-</ecNumber>
    </alternativeName>
</protein>
<gene>
    <name type="primary">tet(56)</name>
    <name type="ordered locus">LLO_2673</name>
</gene>
<dbReference type="EC" id="1.14.13.-" evidence="6"/>
<dbReference type="EMBL" id="FN650140">
    <property type="protein sequence ID" value="CBJ13102.1"/>
    <property type="molecule type" value="Genomic_DNA"/>
</dbReference>
<dbReference type="RefSeq" id="WP_003635403.1">
    <property type="nucleotide sequence ID" value="NC_013861.1"/>
</dbReference>
<dbReference type="PDB" id="5TUM">
    <property type="method" value="X-ray"/>
    <property type="resolution" value="3.30 A"/>
    <property type="chains" value="A/B=1-389"/>
</dbReference>
<dbReference type="PDBsum" id="5TUM"/>
<dbReference type="SMR" id="D3HKY4"/>
<dbReference type="STRING" id="661367.LLO_2673"/>
<dbReference type="CARD" id="ARO:3004603">
    <property type="molecule name" value="tet(56)"/>
    <property type="mechanism identifier" value="ARO:0001004"/>
    <property type="mechanism name" value="antibiotic inactivation"/>
</dbReference>
<dbReference type="GeneID" id="40926871"/>
<dbReference type="KEGG" id="llo:LLO_2673"/>
<dbReference type="eggNOG" id="COG0654">
    <property type="taxonomic scope" value="Bacteria"/>
</dbReference>
<dbReference type="HOGENOM" id="CLU_009665_1_0_6"/>
<dbReference type="OrthoDB" id="5499180at2"/>
<dbReference type="Proteomes" id="UP000001060">
    <property type="component" value="Chromosome"/>
</dbReference>
<dbReference type="GO" id="GO:0071949">
    <property type="term" value="F:FAD binding"/>
    <property type="evidence" value="ECO:0007669"/>
    <property type="project" value="InterPro"/>
</dbReference>
<dbReference type="GO" id="GO:0016491">
    <property type="term" value="F:oxidoreductase activity"/>
    <property type="evidence" value="ECO:0007669"/>
    <property type="project" value="UniProtKB-KW"/>
</dbReference>
<dbReference type="GO" id="GO:0046677">
    <property type="term" value="P:response to antibiotic"/>
    <property type="evidence" value="ECO:0007669"/>
    <property type="project" value="UniProtKB-KW"/>
</dbReference>
<dbReference type="Gene3D" id="3.30.9.10">
    <property type="entry name" value="D-Amino Acid Oxidase, subunit A, domain 2"/>
    <property type="match status" value="1"/>
</dbReference>
<dbReference type="Gene3D" id="3.50.50.60">
    <property type="entry name" value="FAD/NAD(P)-binding domain"/>
    <property type="match status" value="1"/>
</dbReference>
<dbReference type="InterPro" id="IPR002938">
    <property type="entry name" value="FAD-bd"/>
</dbReference>
<dbReference type="InterPro" id="IPR036188">
    <property type="entry name" value="FAD/NAD-bd_sf"/>
</dbReference>
<dbReference type="InterPro" id="IPR051704">
    <property type="entry name" value="FAD_aromatic-hydroxylase"/>
</dbReference>
<dbReference type="NCBIfam" id="NF033476">
    <property type="entry name" value="tet_destruct"/>
    <property type="match status" value="1"/>
</dbReference>
<dbReference type="PANTHER" id="PTHR46865:SF2">
    <property type="entry name" value="MONOOXYGENASE"/>
    <property type="match status" value="1"/>
</dbReference>
<dbReference type="PANTHER" id="PTHR46865">
    <property type="entry name" value="OXIDOREDUCTASE-RELATED"/>
    <property type="match status" value="1"/>
</dbReference>
<dbReference type="Pfam" id="PF01494">
    <property type="entry name" value="FAD_binding_3"/>
    <property type="match status" value="1"/>
</dbReference>
<dbReference type="PRINTS" id="PR00420">
    <property type="entry name" value="RNGMNOXGNASE"/>
</dbReference>
<dbReference type="SUPFAM" id="SSF51905">
    <property type="entry name" value="FAD/NAD(P)-binding domain"/>
    <property type="match status" value="1"/>
</dbReference>
<comment type="function">
    <text evidence="2 3">An FAD-requiring monooxygenase active on tetracycline antibiotic and some of its derivatives, which leads to their inactivation (PubMed:26097034). Expression in E.coli confers high resistance to tetracycline and oxytetracycline, does not confer resistance to minocycline or tigecycline. The reaction requires NADPH (PubMed:26097034). Expression in L.pneumophila confers resistance to tetracycline (PubMed:28481346). Degrades and confers resistance to tetracycline and chlortetracycline (PubMed:26097034, PubMed:28481346).</text>
</comment>
<comment type="catalytic activity">
    <reaction evidence="6 7">
        <text>a tetracycline + NADPH + O2 + H(+) = a (1S,10aS)-3-(CONH2)-1-(Me2N)-3,3a,4,6-(HO)4-2,5-dioxo-1H,10aH,11H,11aH-cyclopenta[b]anthracene + CO + NADP(+) + H2O</text>
        <dbReference type="Rhea" id="RHEA:61564"/>
        <dbReference type="ChEBI" id="CHEBI:15377"/>
        <dbReference type="ChEBI" id="CHEBI:15378"/>
        <dbReference type="ChEBI" id="CHEBI:15379"/>
        <dbReference type="ChEBI" id="CHEBI:17245"/>
        <dbReference type="ChEBI" id="CHEBI:57783"/>
        <dbReference type="ChEBI" id="CHEBI:58349"/>
        <dbReference type="ChEBI" id="CHEBI:144644"/>
        <dbReference type="ChEBI" id="CHEBI:144803"/>
    </reaction>
</comment>
<comment type="catalytic activity">
    <reaction evidence="7">
        <text>7-chlorotetracycline + NADPH + O2 + H(+) = (1S,10S,10aS)-3-(CONH2)-9-Cl-1-(Me2N)-3,3a,4,10-(HO)4-10-Me-2,5-dioxo-1H,10aH,11H,11aH-cyclopenta[b]anthracen-6-olate + CO + NADP(+) + H2O</text>
        <dbReference type="Rhea" id="RHEA:61456"/>
        <dbReference type="ChEBI" id="CHEBI:15377"/>
        <dbReference type="ChEBI" id="CHEBI:15378"/>
        <dbReference type="ChEBI" id="CHEBI:15379"/>
        <dbReference type="ChEBI" id="CHEBI:17245"/>
        <dbReference type="ChEBI" id="CHEBI:57783"/>
        <dbReference type="ChEBI" id="CHEBI:58349"/>
        <dbReference type="ChEBI" id="CHEBI:133598"/>
        <dbReference type="ChEBI" id="CHEBI:144647"/>
    </reaction>
</comment>
<comment type="cofactor">
    <cofactor evidence="3">
        <name>FAD</name>
        <dbReference type="ChEBI" id="CHEBI:57692"/>
    </cofactor>
    <text evidence="3">Binds 1 FAD per subunit.</text>
</comment>
<comment type="activity regulation">
    <text evidence="3">Inhibited by anhydrotetracycline.</text>
</comment>
<comment type="biophysicochemical properties">
    <kinetics>
        <KM evidence="3">7.7 uM for tetracycline</KM>
        <KM evidence="3">3.7 uM for chlortetracycline</KM>
        <text evidence="3">kcat for tetracycline is 6.4 min(-1), kcat for chlortetracycline is 6.6 min(-1).</text>
    </kinetics>
</comment>
<comment type="domain">
    <text evidence="3">Consists of an N-terminal FAD-binding domain with a Rossman fold, a substrate-binding domain and a C-terminal helix that bridges the 2 domains close to the antibiotic-binding site. This last helix is flexible, is not found in TetX of Bacteroides species, and may contribute to their different substrate specificities.</text>
</comment>
<comment type="disruption phenotype">
    <text evidence="3">Increase in bacterial tetracycline sensitivity.</text>
</comment>
<comment type="miscellaneous">
    <text evidence="1">Tetracycline antibiotics bind to the ribosomal acceptor site (A-site), preventing binding of the aminoacyl-tRNA to the A-site. The hydrophilic side of tetracycline makes many hydrogen-bonding interactions with oxygen atoms of the ribosome's phosphate backbone.</text>
</comment>
<comment type="similarity">
    <text evidence="5">Belongs to the aromatic-ring hydroxylase family.</text>
</comment>
<evidence type="ECO:0000250" key="1">
    <source>
        <dbReference type="UniProtKB" id="Q93L51"/>
    </source>
</evidence>
<evidence type="ECO:0000269" key="2">
    <source>
    </source>
</evidence>
<evidence type="ECO:0000269" key="3">
    <source>
    </source>
</evidence>
<evidence type="ECO:0000303" key="4">
    <source>
    </source>
</evidence>
<evidence type="ECO:0000305" key="5"/>
<evidence type="ECO:0000305" key="6">
    <source>
    </source>
</evidence>
<evidence type="ECO:0000305" key="7">
    <source>
    </source>
</evidence>
<evidence type="ECO:0007744" key="8">
    <source>
        <dbReference type="PDB" id="5TUM"/>
    </source>
</evidence>
<evidence type="ECO:0007829" key="9">
    <source>
        <dbReference type="PDB" id="5TUM"/>
    </source>
</evidence>
<name>TET56_LEGLN</name>
<proteinExistence type="evidence at protein level"/>
<keyword id="KW-0002">3D-structure</keyword>
<keyword id="KW-0046">Antibiotic resistance</keyword>
<keyword id="KW-0274">FAD</keyword>
<keyword id="KW-0285">Flavoprotein</keyword>
<keyword id="KW-0521">NADP</keyword>
<keyword id="KW-0547">Nucleotide-binding</keyword>
<keyword id="KW-0560">Oxidoreductase</keyword>
<keyword id="KW-1185">Reference proteome</keyword>
<accession>D3HKY4</accession>